<comment type="function">
    <text evidence="1">Dephosphorylates Wzc. Required for the extracellular polysaccharide colanic acid synthesis. Probably involved in the export of colanic acid from the cell to medium. Involved in protection of cells against contact-dependent growth inhibition (CDI).</text>
</comment>
<comment type="catalytic activity">
    <reaction>
        <text>O-phospho-L-tyrosyl-[protein] + H2O = L-tyrosyl-[protein] + phosphate</text>
        <dbReference type="Rhea" id="RHEA:10684"/>
        <dbReference type="Rhea" id="RHEA-COMP:10136"/>
        <dbReference type="Rhea" id="RHEA-COMP:20101"/>
        <dbReference type="ChEBI" id="CHEBI:15377"/>
        <dbReference type="ChEBI" id="CHEBI:43474"/>
        <dbReference type="ChEBI" id="CHEBI:46858"/>
        <dbReference type="ChEBI" id="CHEBI:61978"/>
        <dbReference type="EC" id="3.1.3.48"/>
    </reaction>
</comment>
<comment type="pathway">
    <text>Glycan metabolism; exopolysaccharide biosynthesis.</text>
</comment>
<comment type="similarity">
    <text evidence="3">Belongs to the low molecular weight phosphotyrosine protein phosphatase family.</text>
</comment>
<organism>
    <name type="scientific">Salmonella typhimurium (strain LT2 / SGSC1412 / ATCC 700720)</name>
    <dbReference type="NCBI Taxonomy" id="99287"/>
    <lineage>
        <taxon>Bacteria</taxon>
        <taxon>Pseudomonadati</taxon>
        <taxon>Pseudomonadota</taxon>
        <taxon>Gammaproteobacteria</taxon>
        <taxon>Enterobacterales</taxon>
        <taxon>Enterobacteriaceae</taxon>
        <taxon>Salmonella</taxon>
    </lineage>
</organism>
<reference key="1">
    <citation type="journal article" date="2000" name="FEMS Microbiol. Lett.">
        <title>The colanic acid gene cluster of Salmonella enterica has a complex history.</title>
        <authorList>
            <person name="Stevenson G."/>
            <person name="Lan R."/>
            <person name="Reeves P.R."/>
        </authorList>
    </citation>
    <scope>NUCLEOTIDE SEQUENCE [GENOMIC DNA]</scope>
    <source>
        <strain>LT2</strain>
    </source>
</reference>
<reference key="2">
    <citation type="journal article" date="2001" name="Nature">
        <title>Complete genome sequence of Salmonella enterica serovar Typhimurium LT2.</title>
        <authorList>
            <person name="McClelland M."/>
            <person name="Sanderson K.E."/>
            <person name="Spieth J."/>
            <person name="Clifton S.W."/>
            <person name="Latreille P."/>
            <person name="Courtney L."/>
            <person name="Porwollik S."/>
            <person name="Ali J."/>
            <person name="Dante M."/>
            <person name="Du F."/>
            <person name="Hou S."/>
            <person name="Layman D."/>
            <person name="Leonard S."/>
            <person name="Nguyen C."/>
            <person name="Scott K."/>
            <person name="Holmes A."/>
            <person name="Grewal N."/>
            <person name="Mulvaney E."/>
            <person name="Ryan E."/>
            <person name="Sun H."/>
            <person name="Florea L."/>
            <person name="Miller W."/>
            <person name="Stoneking T."/>
            <person name="Nhan M."/>
            <person name="Waterston R."/>
            <person name="Wilson R.K."/>
        </authorList>
    </citation>
    <scope>NUCLEOTIDE SEQUENCE [LARGE SCALE GENOMIC DNA]</scope>
    <source>
        <strain>LT2 / SGSC1412 / ATCC 700720</strain>
    </source>
</reference>
<keyword id="KW-0270">Exopolysaccharide synthesis</keyword>
<keyword id="KW-0378">Hydrolase</keyword>
<keyword id="KW-0904">Protein phosphatase</keyword>
<keyword id="KW-1185">Reference proteome</keyword>
<gene>
    <name type="primary">wzb</name>
    <name type="ordered locus">STM2117</name>
</gene>
<dbReference type="EC" id="3.1.3.48"/>
<dbReference type="EMBL" id="AH009899">
    <property type="protein sequence ID" value="AAG24805.1"/>
    <property type="molecule type" value="Genomic_DNA"/>
</dbReference>
<dbReference type="EMBL" id="AE006468">
    <property type="protein sequence ID" value="AAL21021.1"/>
    <property type="molecule type" value="Genomic_DNA"/>
</dbReference>
<dbReference type="RefSeq" id="NP_461062.1">
    <property type="nucleotide sequence ID" value="NC_003197.2"/>
</dbReference>
<dbReference type="RefSeq" id="WP_000482224.1">
    <property type="nucleotide sequence ID" value="NC_003197.2"/>
</dbReference>
<dbReference type="SMR" id="Q9F7B2"/>
<dbReference type="STRING" id="99287.STM2117"/>
<dbReference type="PaxDb" id="99287-STM2117"/>
<dbReference type="GeneID" id="1253638"/>
<dbReference type="KEGG" id="stm:STM2117"/>
<dbReference type="PATRIC" id="fig|99287.12.peg.2239"/>
<dbReference type="HOGENOM" id="CLU_071415_1_1_6"/>
<dbReference type="OMA" id="YQQVTRF"/>
<dbReference type="PhylomeDB" id="Q9F7B2"/>
<dbReference type="BioCyc" id="SENT99287:STM2117-MONOMER"/>
<dbReference type="UniPathway" id="UPA00631"/>
<dbReference type="Proteomes" id="UP000001014">
    <property type="component" value="Chromosome"/>
</dbReference>
<dbReference type="GO" id="GO:0004725">
    <property type="term" value="F:protein tyrosine phosphatase activity"/>
    <property type="evidence" value="ECO:0000318"/>
    <property type="project" value="GO_Central"/>
</dbReference>
<dbReference type="GO" id="GO:0000271">
    <property type="term" value="P:polysaccharide biosynthetic process"/>
    <property type="evidence" value="ECO:0007669"/>
    <property type="project" value="UniProtKB-KW"/>
</dbReference>
<dbReference type="CDD" id="cd16343">
    <property type="entry name" value="LMWPTP"/>
    <property type="match status" value="1"/>
</dbReference>
<dbReference type="FunFam" id="3.40.50.2300:FF:000041">
    <property type="entry name" value="Low molecular weight protein-tyrosine-phosphatase"/>
    <property type="match status" value="1"/>
</dbReference>
<dbReference type="Gene3D" id="3.40.50.2300">
    <property type="match status" value="1"/>
</dbReference>
<dbReference type="InterPro" id="IPR050438">
    <property type="entry name" value="LMW_PTPase"/>
</dbReference>
<dbReference type="InterPro" id="IPR023485">
    <property type="entry name" value="Ptyr_pPase"/>
</dbReference>
<dbReference type="InterPro" id="IPR036196">
    <property type="entry name" value="Ptyr_pPase_sf"/>
</dbReference>
<dbReference type="InterPro" id="IPR017867">
    <property type="entry name" value="Tyr_phospatase_low_mol_wt"/>
</dbReference>
<dbReference type="NCBIfam" id="NF007520">
    <property type="entry name" value="PRK10126.1"/>
    <property type="match status" value="1"/>
</dbReference>
<dbReference type="PANTHER" id="PTHR11717">
    <property type="entry name" value="LOW MOLECULAR WEIGHT PROTEIN TYROSINE PHOSPHATASE"/>
    <property type="match status" value="1"/>
</dbReference>
<dbReference type="PANTHER" id="PTHR11717:SF31">
    <property type="entry name" value="LOW MOLECULAR WEIGHT PROTEIN-TYROSINE-PHOSPHATASE ETP-RELATED"/>
    <property type="match status" value="1"/>
</dbReference>
<dbReference type="Pfam" id="PF01451">
    <property type="entry name" value="LMWPc"/>
    <property type="match status" value="1"/>
</dbReference>
<dbReference type="PRINTS" id="PR00719">
    <property type="entry name" value="LMWPTPASE"/>
</dbReference>
<dbReference type="SMART" id="SM00226">
    <property type="entry name" value="LMWPc"/>
    <property type="match status" value="1"/>
</dbReference>
<dbReference type="SUPFAM" id="SSF52788">
    <property type="entry name" value="Phosphotyrosine protein phosphatases I"/>
    <property type="match status" value="1"/>
</dbReference>
<protein>
    <recommendedName>
        <fullName>Low molecular weight protein-tyrosine-phosphatase Wzb</fullName>
        <ecNumber>3.1.3.48</ecNumber>
    </recommendedName>
</protein>
<evidence type="ECO:0000250" key="1">
    <source>
        <dbReference type="UniProtKB" id="P0AAB2"/>
    </source>
</evidence>
<evidence type="ECO:0000250" key="2">
    <source>
        <dbReference type="UniProtKB" id="P11064"/>
    </source>
</evidence>
<evidence type="ECO:0000305" key="3"/>
<proteinExistence type="inferred from homology"/>
<name>WZB_SALTY</name>
<feature type="chain" id="PRO_0000046575" description="Low molecular weight protein-tyrosine-phosphatase Wzb">
    <location>
        <begin position="1"/>
        <end position="149"/>
    </location>
</feature>
<feature type="active site" description="Nucleophile" evidence="2">
    <location>
        <position position="9"/>
    </location>
</feature>
<feature type="active site" evidence="2">
    <location>
        <position position="15"/>
    </location>
</feature>
<feature type="active site" description="Proton donor" evidence="2">
    <location>
        <position position="115"/>
    </location>
</feature>
<accession>Q9F7B2</accession>
<sequence length="149" mass="16474">MFNKILVVCVGNVCRSPTAERLLKRFHPSLTVASAGLGALVGKGADPAAASVASAHDLSLENHCARQISARLCREYDLILTMEKRHIAALCDIAPEMRGKVMLFGHWDSEREIPDPYRKSRDAFEAVYTLLERSARQWAQALNAEQGKP</sequence>